<proteinExistence type="inferred from homology"/>
<comment type="function">
    <text evidence="1">Binds to the 23S rRNA.</text>
</comment>
<comment type="subunit">
    <text evidence="1">Part of the 50S ribosomal subunit.</text>
</comment>
<comment type="similarity">
    <text evidence="1">Belongs to the universal ribosomal protein uL15 family.</text>
</comment>
<gene>
    <name evidence="1" type="primary">rplO</name>
    <name type="ordered locus">ACICU_03259</name>
</gene>
<reference key="1">
    <citation type="journal article" date="2008" name="Antimicrob. Agents Chemother.">
        <title>Whole-genome pyrosequencing of an epidemic multidrug-resistant Acinetobacter baumannii strain belonging to the European clone II group.</title>
        <authorList>
            <person name="Iacono M."/>
            <person name="Villa L."/>
            <person name="Fortini D."/>
            <person name="Bordoni R."/>
            <person name="Imperi F."/>
            <person name="Bonnal R.J."/>
            <person name="Sicheritz-Ponten T."/>
            <person name="De Bellis G."/>
            <person name="Visca P."/>
            <person name="Cassone A."/>
            <person name="Carattoli A."/>
        </authorList>
    </citation>
    <scope>NUCLEOTIDE SEQUENCE [LARGE SCALE GENOMIC DNA]</scope>
    <source>
        <strain>ACICU</strain>
    </source>
</reference>
<feature type="chain" id="PRO_1000142758" description="Large ribosomal subunit protein uL15">
    <location>
        <begin position="1"/>
        <end position="146"/>
    </location>
</feature>
<feature type="region of interest" description="Disordered" evidence="2">
    <location>
        <begin position="1"/>
        <end position="54"/>
    </location>
</feature>
<feature type="compositionally biased region" description="Gly residues" evidence="2">
    <location>
        <begin position="23"/>
        <end position="37"/>
    </location>
</feature>
<dbReference type="EMBL" id="CP000863">
    <property type="protein sequence ID" value="ACC58571.1"/>
    <property type="molecule type" value="Genomic_DNA"/>
</dbReference>
<dbReference type="RefSeq" id="WP_000175340.1">
    <property type="nucleotide sequence ID" value="NZ_CP031380.1"/>
</dbReference>
<dbReference type="SMR" id="B2HZ89"/>
<dbReference type="GeneID" id="92895298"/>
<dbReference type="KEGG" id="abc:ACICU_03259"/>
<dbReference type="HOGENOM" id="CLU_055188_4_2_6"/>
<dbReference type="Proteomes" id="UP000008839">
    <property type="component" value="Chromosome"/>
</dbReference>
<dbReference type="GO" id="GO:0022625">
    <property type="term" value="C:cytosolic large ribosomal subunit"/>
    <property type="evidence" value="ECO:0007669"/>
    <property type="project" value="TreeGrafter"/>
</dbReference>
<dbReference type="GO" id="GO:0019843">
    <property type="term" value="F:rRNA binding"/>
    <property type="evidence" value="ECO:0007669"/>
    <property type="project" value="UniProtKB-UniRule"/>
</dbReference>
<dbReference type="GO" id="GO:0003735">
    <property type="term" value="F:structural constituent of ribosome"/>
    <property type="evidence" value="ECO:0007669"/>
    <property type="project" value="InterPro"/>
</dbReference>
<dbReference type="GO" id="GO:0006412">
    <property type="term" value="P:translation"/>
    <property type="evidence" value="ECO:0007669"/>
    <property type="project" value="UniProtKB-UniRule"/>
</dbReference>
<dbReference type="Gene3D" id="3.100.10.10">
    <property type="match status" value="1"/>
</dbReference>
<dbReference type="HAMAP" id="MF_01341">
    <property type="entry name" value="Ribosomal_uL15"/>
    <property type="match status" value="1"/>
</dbReference>
<dbReference type="InterPro" id="IPR030878">
    <property type="entry name" value="Ribosomal_uL15"/>
</dbReference>
<dbReference type="InterPro" id="IPR021131">
    <property type="entry name" value="Ribosomal_uL15/eL18"/>
</dbReference>
<dbReference type="InterPro" id="IPR036227">
    <property type="entry name" value="Ribosomal_uL15/eL18_sf"/>
</dbReference>
<dbReference type="InterPro" id="IPR005749">
    <property type="entry name" value="Ribosomal_uL15_bac-type"/>
</dbReference>
<dbReference type="InterPro" id="IPR001196">
    <property type="entry name" value="Ribosomal_uL15_CS"/>
</dbReference>
<dbReference type="NCBIfam" id="TIGR01071">
    <property type="entry name" value="rplO_bact"/>
    <property type="match status" value="1"/>
</dbReference>
<dbReference type="PANTHER" id="PTHR12934">
    <property type="entry name" value="50S RIBOSOMAL PROTEIN L15"/>
    <property type="match status" value="1"/>
</dbReference>
<dbReference type="PANTHER" id="PTHR12934:SF11">
    <property type="entry name" value="LARGE RIBOSOMAL SUBUNIT PROTEIN UL15M"/>
    <property type="match status" value="1"/>
</dbReference>
<dbReference type="Pfam" id="PF00828">
    <property type="entry name" value="Ribosomal_L27A"/>
    <property type="match status" value="1"/>
</dbReference>
<dbReference type="SUPFAM" id="SSF52080">
    <property type="entry name" value="Ribosomal proteins L15p and L18e"/>
    <property type="match status" value="1"/>
</dbReference>
<dbReference type="PROSITE" id="PS00475">
    <property type="entry name" value="RIBOSOMAL_L15"/>
    <property type="match status" value="1"/>
</dbReference>
<organism>
    <name type="scientific">Acinetobacter baumannii (strain ACICU)</name>
    <dbReference type="NCBI Taxonomy" id="405416"/>
    <lineage>
        <taxon>Bacteria</taxon>
        <taxon>Pseudomonadati</taxon>
        <taxon>Pseudomonadota</taxon>
        <taxon>Gammaproteobacteria</taxon>
        <taxon>Moraxellales</taxon>
        <taxon>Moraxellaceae</taxon>
        <taxon>Acinetobacter</taxon>
        <taxon>Acinetobacter calcoaceticus/baumannii complex</taxon>
    </lineage>
</organism>
<accession>B2HZ89</accession>
<protein>
    <recommendedName>
        <fullName evidence="1">Large ribosomal subunit protein uL15</fullName>
    </recommendedName>
    <alternativeName>
        <fullName evidence="3">50S ribosomal protein L15</fullName>
    </alternativeName>
</protein>
<evidence type="ECO:0000255" key="1">
    <source>
        <dbReference type="HAMAP-Rule" id="MF_01341"/>
    </source>
</evidence>
<evidence type="ECO:0000256" key="2">
    <source>
        <dbReference type="SAM" id="MobiDB-lite"/>
    </source>
</evidence>
<evidence type="ECO:0000305" key="3"/>
<keyword id="KW-0687">Ribonucleoprotein</keyword>
<keyword id="KW-0689">Ribosomal protein</keyword>
<keyword id="KW-0694">RNA-binding</keyword>
<keyword id="KW-0699">rRNA-binding</keyword>
<sequence>MTLRLNELAPAEGAKREHRRLGRGIGSGVGKTGGRGIKGQKSRKSGGVRPGFEGGQTAIYRRLPKFGFTSQIALKTAEVRLSELSKVEGDIVSLETLKAANVVRRDQIRARIVLSGEITRAFTVQGVALTKGAKAAIEAAGGKVEE</sequence>
<name>RL15_ACIBC</name>